<feature type="chain" id="PRO_1000082946" description="UPF0761 membrane protein COXBURSA331_A1765">
    <location>
        <begin position="1"/>
        <end position="278"/>
    </location>
</feature>
<feature type="transmembrane region" description="Helical" evidence="1">
    <location>
        <begin position="38"/>
        <end position="58"/>
    </location>
</feature>
<feature type="transmembrane region" description="Helical" evidence="1">
    <location>
        <begin position="68"/>
        <end position="88"/>
    </location>
</feature>
<feature type="transmembrane region" description="Helical" evidence="1">
    <location>
        <begin position="92"/>
        <end position="112"/>
    </location>
</feature>
<feature type="transmembrane region" description="Helical" evidence="1">
    <location>
        <begin position="134"/>
        <end position="154"/>
    </location>
</feature>
<feature type="transmembrane region" description="Helical" evidence="1">
    <location>
        <begin position="177"/>
        <end position="197"/>
    </location>
</feature>
<feature type="transmembrane region" description="Helical" evidence="1">
    <location>
        <begin position="207"/>
        <end position="227"/>
    </location>
</feature>
<feature type="transmembrane region" description="Helical" evidence="1">
    <location>
        <begin position="244"/>
        <end position="264"/>
    </location>
</feature>
<organism>
    <name type="scientific">Coxiella burnetii (strain RSA 331 / Henzerling II)</name>
    <dbReference type="NCBI Taxonomy" id="360115"/>
    <lineage>
        <taxon>Bacteria</taxon>
        <taxon>Pseudomonadati</taxon>
        <taxon>Pseudomonadota</taxon>
        <taxon>Gammaproteobacteria</taxon>
        <taxon>Legionellales</taxon>
        <taxon>Coxiellaceae</taxon>
        <taxon>Coxiella</taxon>
    </lineage>
</organism>
<keyword id="KW-0997">Cell inner membrane</keyword>
<keyword id="KW-1003">Cell membrane</keyword>
<keyword id="KW-0472">Membrane</keyword>
<keyword id="KW-0812">Transmembrane</keyword>
<keyword id="KW-1133">Transmembrane helix</keyword>
<dbReference type="EMBL" id="CP000890">
    <property type="protein sequence ID" value="ABX77912.1"/>
    <property type="molecule type" value="Genomic_DNA"/>
</dbReference>
<dbReference type="RefSeq" id="WP_005772112.1">
    <property type="nucleotide sequence ID" value="NC_010117.1"/>
</dbReference>
<dbReference type="KEGG" id="cbs:COXBURSA331_A1765"/>
<dbReference type="HOGENOM" id="CLU_032288_0_0_6"/>
<dbReference type="GO" id="GO:0005886">
    <property type="term" value="C:plasma membrane"/>
    <property type="evidence" value="ECO:0007669"/>
    <property type="project" value="UniProtKB-SubCell"/>
</dbReference>
<dbReference type="HAMAP" id="MF_00672">
    <property type="entry name" value="UPF0761"/>
    <property type="match status" value="1"/>
</dbReference>
<dbReference type="InterPro" id="IPR023679">
    <property type="entry name" value="UPF0761_bac"/>
</dbReference>
<dbReference type="InterPro" id="IPR017039">
    <property type="entry name" value="Virul_fac_BrkB"/>
</dbReference>
<dbReference type="NCBIfam" id="TIGR00765">
    <property type="entry name" value="yihY_not_rbn"/>
    <property type="match status" value="1"/>
</dbReference>
<dbReference type="PANTHER" id="PTHR30213">
    <property type="entry name" value="INNER MEMBRANE PROTEIN YHJD"/>
    <property type="match status" value="1"/>
</dbReference>
<dbReference type="PANTHER" id="PTHR30213:SF0">
    <property type="entry name" value="UPF0761 MEMBRANE PROTEIN YIHY"/>
    <property type="match status" value="1"/>
</dbReference>
<dbReference type="Pfam" id="PF03631">
    <property type="entry name" value="Virul_fac_BrkB"/>
    <property type="match status" value="1"/>
</dbReference>
<dbReference type="PIRSF" id="PIRSF035875">
    <property type="entry name" value="RNase_BN"/>
    <property type="match status" value="1"/>
</dbReference>
<evidence type="ECO:0000255" key="1">
    <source>
        <dbReference type="HAMAP-Rule" id="MF_00672"/>
    </source>
</evidence>
<proteinExistence type="inferred from homology"/>
<reference key="1">
    <citation type="submission" date="2007-11" db="EMBL/GenBank/DDBJ databases">
        <title>Genome sequencing of phylogenetically and phenotypically diverse Coxiella burnetii isolates.</title>
        <authorList>
            <person name="Seshadri R."/>
            <person name="Samuel J.E."/>
        </authorList>
    </citation>
    <scope>NUCLEOTIDE SEQUENCE [LARGE SCALE GENOMIC DNA]</scope>
    <source>
        <strain>RSA 331 / Henzerling II</strain>
    </source>
</reference>
<comment type="subcellular location">
    <subcellularLocation>
        <location evidence="1">Cell inner membrane</location>
        <topology evidence="1">Multi-pass membrane protein</topology>
    </subcellularLocation>
</comment>
<comment type="similarity">
    <text evidence="1">Belongs to the UPF0761 family.</text>
</comment>
<sequence length="278" mass="31422">MTIYRFFKRSAFTLAYIYRRFHEEGCAYRATALAYTTLLALVPLTIVAFTLLSFVPAFQGVGVRLQNLIWENFVPTSAGMVAAYLSQLTQNVTGLSIINIFFLGIVALLLMYNINRAFVAIWHTEHHFRLSLHFLIYFMVLLLSPFLLGAVMLLGTFLVQSPLVTDLIGWPYLGKGLLFVLPYVLIFITFTLFNWVLPSAKVKLSHAVIGGLVTTVLFELAKFAFTVYLKFFPTYRVIYGALSVIPIFLVWLYVSWTIILLGAVVSNVIACGIPEKYK</sequence>
<protein>
    <recommendedName>
        <fullName evidence="1">UPF0761 membrane protein COXBURSA331_A1765</fullName>
    </recommendedName>
</protein>
<name>Y1765_COXBR</name>
<accession>A9N9B0</accession>
<gene>
    <name type="ordered locus">COXBURSA331_A1765</name>
</gene>